<sequence length="123" mass="14085">MARIAGVDLPREKRVEVGLTYIYGIGLPTAQKILARTGVNPETRIRDLSEEEVNRLREVIDKEIKVEGDLRREVSLNIKRLMEIGCYRGLRHRRGLPVRGQRTKTNARTRKGPIKTVGAKRKK</sequence>
<organism>
    <name type="scientific">Desulfitobacterium hafniense (strain DSM 10664 / DCB-2)</name>
    <dbReference type="NCBI Taxonomy" id="272564"/>
    <lineage>
        <taxon>Bacteria</taxon>
        <taxon>Bacillati</taxon>
        <taxon>Bacillota</taxon>
        <taxon>Clostridia</taxon>
        <taxon>Eubacteriales</taxon>
        <taxon>Desulfitobacteriaceae</taxon>
        <taxon>Desulfitobacterium</taxon>
    </lineage>
</organism>
<dbReference type="EMBL" id="CP001336">
    <property type="protein sequence ID" value="ACL18514.1"/>
    <property type="molecule type" value="Genomic_DNA"/>
</dbReference>
<dbReference type="RefSeq" id="WP_005810116.1">
    <property type="nucleotide sequence ID" value="NC_011830.1"/>
</dbReference>
<dbReference type="SMR" id="B8G1Z1"/>
<dbReference type="KEGG" id="dhd:Dhaf_0447"/>
<dbReference type="HOGENOM" id="CLU_103849_1_2_9"/>
<dbReference type="Proteomes" id="UP000007726">
    <property type="component" value="Chromosome"/>
</dbReference>
<dbReference type="GO" id="GO:0005829">
    <property type="term" value="C:cytosol"/>
    <property type="evidence" value="ECO:0007669"/>
    <property type="project" value="TreeGrafter"/>
</dbReference>
<dbReference type="GO" id="GO:0015935">
    <property type="term" value="C:small ribosomal subunit"/>
    <property type="evidence" value="ECO:0007669"/>
    <property type="project" value="TreeGrafter"/>
</dbReference>
<dbReference type="GO" id="GO:0019843">
    <property type="term" value="F:rRNA binding"/>
    <property type="evidence" value="ECO:0007669"/>
    <property type="project" value="UniProtKB-UniRule"/>
</dbReference>
<dbReference type="GO" id="GO:0003735">
    <property type="term" value="F:structural constituent of ribosome"/>
    <property type="evidence" value="ECO:0007669"/>
    <property type="project" value="InterPro"/>
</dbReference>
<dbReference type="GO" id="GO:0000049">
    <property type="term" value="F:tRNA binding"/>
    <property type="evidence" value="ECO:0007669"/>
    <property type="project" value="UniProtKB-UniRule"/>
</dbReference>
<dbReference type="GO" id="GO:0006412">
    <property type="term" value="P:translation"/>
    <property type="evidence" value="ECO:0007669"/>
    <property type="project" value="UniProtKB-UniRule"/>
</dbReference>
<dbReference type="FunFam" id="1.10.8.50:FF:000001">
    <property type="entry name" value="30S ribosomal protein S13"/>
    <property type="match status" value="1"/>
</dbReference>
<dbReference type="FunFam" id="4.10.910.10:FF:000001">
    <property type="entry name" value="30S ribosomal protein S13"/>
    <property type="match status" value="1"/>
</dbReference>
<dbReference type="Gene3D" id="1.10.8.50">
    <property type="match status" value="1"/>
</dbReference>
<dbReference type="Gene3D" id="4.10.910.10">
    <property type="entry name" value="30s ribosomal protein s13, domain 2"/>
    <property type="match status" value="1"/>
</dbReference>
<dbReference type="HAMAP" id="MF_01315">
    <property type="entry name" value="Ribosomal_uS13"/>
    <property type="match status" value="1"/>
</dbReference>
<dbReference type="InterPro" id="IPR027437">
    <property type="entry name" value="Rbsml_uS13_C"/>
</dbReference>
<dbReference type="InterPro" id="IPR001892">
    <property type="entry name" value="Ribosomal_uS13"/>
</dbReference>
<dbReference type="InterPro" id="IPR010979">
    <property type="entry name" value="Ribosomal_uS13-like_H2TH"/>
</dbReference>
<dbReference type="InterPro" id="IPR019980">
    <property type="entry name" value="Ribosomal_uS13_bac-type"/>
</dbReference>
<dbReference type="InterPro" id="IPR018269">
    <property type="entry name" value="Ribosomal_uS13_CS"/>
</dbReference>
<dbReference type="NCBIfam" id="TIGR03631">
    <property type="entry name" value="uS13_bact"/>
    <property type="match status" value="1"/>
</dbReference>
<dbReference type="PANTHER" id="PTHR10871">
    <property type="entry name" value="30S RIBOSOMAL PROTEIN S13/40S RIBOSOMAL PROTEIN S18"/>
    <property type="match status" value="1"/>
</dbReference>
<dbReference type="PANTHER" id="PTHR10871:SF1">
    <property type="entry name" value="SMALL RIBOSOMAL SUBUNIT PROTEIN US13M"/>
    <property type="match status" value="1"/>
</dbReference>
<dbReference type="Pfam" id="PF00416">
    <property type="entry name" value="Ribosomal_S13"/>
    <property type="match status" value="1"/>
</dbReference>
<dbReference type="PIRSF" id="PIRSF002134">
    <property type="entry name" value="Ribosomal_S13"/>
    <property type="match status" value="1"/>
</dbReference>
<dbReference type="SUPFAM" id="SSF46946">
    <property type="entry name" value="S13-like H2TH domain"/>
    <property type="match status" value="1"/>
</dbReference>
<dbReference type="PROSITE" id="PS00646">
    <property type="entry name" value="RIBOSOMAL_S13_1"/>
    <property type="match status" value="1"/>
</dbReference>
<dbReference type="PROSITE" id="PS50159">
    <property type="entry name" value="RIBOSOMAL_S13_2"/>
    <property type="match status" value="1"/>
</dbReference>
<protein>
    <recommendedName>
        <fullName evidence="1">Small ribosomal subunit protein uS13</fullName>
    </recommendedName>
    <alternativeName>
        <fullName evidence="3">30S ribosomal protein S13</fullName>
    </alternativeName>
</protein>
<proteinExistence type="inferred from homology"/>
<gene>
    <name evidence="1" type="primary">rpsM</name>
    <name type="ordered locus">Dhaf_0447</name>
</gene>
<evidence type="ECO:0000255" key="1">
    <source>
        <dbReference type="HAMAP-Rule" id="MF_01315"/>
    </source>
</evidence>
<evidence type="ECO:0000256" key="2">
    <source>
        <dbReference type="SAM" id="MobiDB-lite"/>
    </source>
</evidence>
<evidence type="ECO:0000305" key="3"/>
<keyword id="KW-0687">Ribonucleoprotein</keyword>
<keyword id="KW-0689">Ribosomal protein</keyword>
<keyword id="KW-0694">RNA-binding</keyword>
<keyword id="KW-0699">rRNA-binding</keyword>
<keyword id="KW-0820">tRNA-binding</keyword>
<feature type="chain" id="PRO_1000165619" description="Small ribosomal subunit protein uS13">
    <location>
        <begin position="1"/>
        <end position="123"/>
    </location>
</feature>
<feature type="region of interest" description="Disordered" evidence="2">
    <location>
        <begin position="95"/>
        <end position="123"/>
    </location>
</feature>
<reference key="1">
    <citation type="journal article" date="2012" name="BMC Microbiol.">
        <title>Genome sequence of Desulfitobacterium hafniense DCB-2, a Gram-positive anaerobe capable of dehalogenation and metal reduction.</title>
        <authorList>
            <person name="Kim S.H."/>
            <person name="Harzman C."/>
            <person name="Davis J.K."/>
            <person name="Hutcheson R."/>
            <person name="Broderick J.B."/>
            <person name="Marsh T.L."/>
            <person name="Tiedje J.M."/>
        </authorList>
    </citation>
    <scope>NUCLEOTIDE SEQUENCE [LARGE SCALE GENOMIC DNA]</scope>
    <source>
        <strain>DSM 10664 / DCB-2</strain>
    </source>
</reference>
<comment type="function">
    <text evidence="1">Located at the top of the head of the 30S subunit, it contacts several helices of the 16S rRNA. In the 70S ribosome it contacts the 23S rRNA (bridge B1a) and protein L5 of the 50S subunit (bridge B1b), connecting the 2 subunits; these bridges are implicated in subunit movement. Contacts the tRNAs in the A and P-sites.</text>
</comment>
<comment type="subunit">
    <text evidence="1">Part of the 30S ribosomal subunit. Forms a loose heterodimer with protein S19. Forms two bridges to the 50S subunit in the 70S ribosome.</text>
</comment>
<comment type="similarity">
    <text evidence="1">Belongs to the universal ribosomal protein uS13 family.</text>
</comment>
<name>RS13_DESHD</name>
<accession>B8G1Z1</accession>